<dbReference type="EC" id="1.1.1.27" evidence="1"/>
<dbReference type="EMBL" id="AE017221">
    <property type="protein sequence ID" value="AAS81094.1"/>
    <property type="molecule type" value="Genomic_DNA"/>
</dbReference>
<dbReference type="RefSeq" id="WP_011173185.1">
    <property type="nucleotide sequence ID" value="NC_005835.1"/>
</dbReference>
<dbReference type="SMR" id="P62055"/>
<dbReference type="KEGG" id="tth:TT_C0748"/>
<dbReference type="eggNOG" id="COG0039">
    <property type="taxonomic scope" value="Bacteria"/>
</dbReference>
<dbReference type="HOGENOM" id="CLU_045401_1_1_0"/>
<dbReference type="OrthoDB" id="9802969at2"/>
<dbReference type="UniPathway" id="UPA00554">
    <property type="reaction ID" value="UER00611"/>
</dbReference>
<dbReference type="Proteomes" id="UP000000592">
    <property type="component" value="Chromosome"/>
</dbReference>
<dbReference type="GO" id="GO:0005737">
    <property type="term" value="C:cytoplasm"/>
    <property type="evidence" value="ECO:0007669"/>
    <property type="project" value="UniProtKB-SubCell"/>
</dbReference>
<dbReference type="GO" id="GO:0004459">
    <property type="term" value="F:L-lactate dehydrogenase activity"/>
    <property type="evidence" value="ECO:0007669"/>
    <property type="project" value="UniProtKB-UniRule"/>
</dbReference>
<dbReference type="GO" id="GO:0006096">
    <property type="term" value="P:glycolytic process"/>
    <property type="evidence" value="ECO:0007669"/>
    <property type="project" value="UniProtKB-UniRule"/>
</dbReference>
<dbReference type="GO" id="GO:0006089">
    <property type="term" value="P:lactate metabolic process"/>
    <property type="evidence" value="ECO:0007669"/>
    <property type="project" value="TreeGrafter"/>
</dbReference>
<dbReference type="CDD" id="cd05292">
    <property type="entry name" value="LDH_2"/>
    <property type="match status" value="1"/>
</dbReference>
<dbReference type="Gene3D" id="3.90.110.10">
    <property type="entry name" value="Lactate dehydrogenase/glycoside hydrolase, family 4, C-terminal"/>
    <property type="match status" value="1"/>
</dbReference>
<dbReference type="Gene3D" id="3.40.50.720">
    <property type="entry name" value="NAD(P)-binding Rossmann-like Domain"/>
    <property type="match status" value="1"/>
</dbReference>
<dbReference type="HAMAP" id="MF_00488">
    <property type="entry name" value="Lactate_dehydrog"/>
    <property type="match status" value="1"/>
</dbReference>
<dbReference type="InterPro" id="IPR001557">
    <property type="entry name" value="L-lactate/malate_DH"/>
</dbReference>
<dbReference type="InterPro" id="IPR011304">
    <property type="entry name" value="L-lactate_DH"/>
</dbReference>
<dbReference type="InterPro" id="IPR018177">
    <property type="entry name" value="L-lactate_DH_AS"/>
</dbReference>
<dbReference type="InterPro" id="IPR022383">
    <property type="entry name" value="Lactate/malate_DH_C"/>
</dbReference>
<dbReference type="InterPro" id="IPR001236">
    <property type="entry name" value="Lactate/malate_DH_N"/>
</dbReference>
<dbReference type="InterPro" id="IPR015955">
    <property type="entry name" value="Lactate_DH/Glyco_Ohase_4_C"/>
</dbReference>
<dbReference type="InterPro" id="IPR036291">
    <property type="entry name" value="NAD(P)-bd_dom_sf"/>
</dbReference>
<dbReference type="NCBIfam" id="TIGR01771">
    <property type="entry name" value="L-LDH-NAD"/>
    <property type="match status" value="1"/>
</dbReference>
<dbReference type="PANTHER" id="PTHR43128">
    <property type="entry name" value="L-2-HYDROXYCARBOXYLATE DEHYDROGENASE (NAD(P)(+))"/>
    <property type="match status" value="1"/>
</dbReference>
<dbReference type="PANTHER" id="PTHR43128:SF16">
    <property type="entry name" value="L-LACTATE DEHYDROGENASE"/>
    <property type="match status" value="1"/>
</dbReference>
<dbReference type="Pfam" id="PF02866">
    <property type="entry name" value="Ldh_1_C"/>
    <property type="match status" value="1"/>
</dbReference>
<dbReference type="Pfam" id="PF00056">
    <property type="entry name" value="Ldh_1_N"/>
    <property type="match status" value="1"/>
</dbReference>
<dbReference type="PIRSF" id="PIRSF000102">
    <property type="entry name" value="Lac_mal_DH"/>
    <property type="match status" value="1"/>
</dbReference>
<dbReference type="PRINTS" id="PR00086">
    <property type="entry name" value="LLDHDRGNASE"/>
</dbReference>
<dbReference type="SUPFAM" id="SSF56327">
    <property type="entry name" value="LDH C-terminal domain-like"/>
    <property type="match status" value="1"/>
</dbReference>
<dbReference type="SUPFAM" id="SSF51735">
    <property type="entry name" value="NAD(P)-binding Rossmann-fold domains"/>
    <property type="match status" value="1"/>
</dbReference>
<dbReference type="PROSITE" id="PS00064">
    <property type="entry name" value="L_LDH"/>
    <property type="match status" value="1"/>
</dbReference>
<feature type="chain" id="PRO_0000168408" description="L-lactate dehydrogenase">
    <location>
        <begin position="1"/>
        <end position="310"/>
    </location>
</feature>
<feature type="active site" description="Proton acceptor" evidence="1">
    <location>
        <position position="172"/>
    </location>
</feature>
<feature type="binding site" evidence="1">
    <location>
        <position position="11"/>
    </location>
    <ligand>
        <name>NAD(+)</name>
        <dbReference type="ChEBI" id="CHEBI:57540"/>
    </ligand>
</feature>
<feature type="binding site" evidence="1">
    <location>
        <position position="32"/>
    </location>
    <ligand>
        <name>NAD(+)</name>
        <dbReference type="ChEBI" id="CHEBI:57540"/>
    </ligand>
</feature>
<feature type="binding site" evidence="1">
    <location>
        <position position="62"/>
    </location>
    <ligand>
        <name>NAD(+)</name>
        <dbReference type="ChEBI" id="CHEBI:57540"/>
    </ligand>
</feature>
<feature type="binding site" evidence="1">
    <location>
        <begin position="76"/>
        <end position="77"/>
    </location>
    <ligand>
        <name>NAD(+)</name>
        <dbReference type="ChEBI" id="CHEBI:57540"/>
    </ligand>
</feature>
<feature type="binding site" evidence="1">
    <location>
        <position position="79"/>
    </location>
    <ligand>
        <name>substrate</name>
    </ligand>
</feature>
<feature type="binding site" evidence="1">
    <location>
        <position position="85"/>
    </location>
    <ligand>
        <name>substrate</name>
    </ligand>
</feature>
<feature type="binding site" evidence="1">
    <location>
        <begin position="115"/>
        <end position="117"/>
    </location>
    <ligand>
        <name>NAD(+)</name>
        <dbReference type="ChEBI" id="CHEBI:57540"/>
    </ligand>
</feature>
<feature type="binding site" evidence="1">
    <location>
        <begin position="117"/>
        <end position="120"/>
    </location>
    <ligand>
        <name>substrate</name>
    </ligand>
</feature>
<feature type="binding site" evidence="1">
    <location>
        <position position="140"/>
    </location>
    <ligand>
        <name>NAD(+)</name>
        <dbReference type="ChEBI" id="CHEBI:57540"/>
    </ligand>
</feature>
<feature type="binding site" evidence="1">
    <location>
        <begin position="145"/>
        <end position="148"/>
    </location>
    <ligand>
        <name>substrate</name>
    </ligand>
</feature>
<feature type="binding site" evidence="1">
    <location>
        <position position="150"/>
    </location>
    <ligand>
        <name>beta-D-fructose 1,6-bisphosphate</name>
        <dbReference type="ChEBI" id="CHEBI:32966"/>
        <note>allosteric activator</note>
    </ligand>
</feature>
<feature type="binding site" evidence="1">
    <location>
        <position position="165"/>
    </location>
    <ligand>
        <name>beta-D-fructose 1,6-bisphosphate</name>
        <dbReference type="ChEBI" id="CHEBI:32966"/>
        <note>allosteric activator</note>
    </ligand>
</feature>
<feature type="binding site" evidence="1">
    <location>
        <position position="227"/>
    </location>
    <ligand>
        <name>substrate</name>
    </ligand>
</feature>
<feature type="modified residue" description="Phosphotyrosine" evidence="1">
    <location>
        <position position="218"/>
    </location>
</feature>
<protein>
    <recommendedName>
        <fullName evidence="1">L-lactate dehydrogenase</fullName>
        <shortName evidence="1">L-LDH</shortName>
        <ecNumber evidence="1">1.1.1.27</ecNumber>
    </recommendedName>
</protein>
<gene>
    <name evidence="1" type="primary">ldh</name>
    <name type="ordered locus">TT_C0748</name>
</gene>
<comment type="function">
    <text evidence="1">Catalyzes the conversion of lactate to pyruvate.</text>
</comment>
<comment type="catalytic activity">
    <reaction evidence="1">
        <text>(S)-lactate + NAD(+) = pyruvate + NADH + H(+)</text>
        <dbReference type="Rhea" id="RHEA:23444"/>
        <dbReference type="ChEBI" id="CHEBI:15361"/>
        <dbReference type="ChEBI" id="CHEBI:15378"/>
        <dbReference type="ChEBI" id="CHEBI:16651"/>
        <dbReference type="ChEBI" id="CHEBI:57540"/>
        <dbReference type="ChEBI" id="CHEBI:57945"/>
        <dbReference type="EC" id="1.1.1.27"/>
    </reaction>
</comment>
<comment type="activity regulation">
    <text evidence="1">Allosterically activated by fructose 1,6-bisphosphate (FBP).</text>
</comment>
<comment type="pathway">
    <text evidence="1">Fermentation; pyruvate fermentation to lactate; (S)-lactate from pyruvate: step 1/1.</text>
</comment>
<comment type="subunit">
    <text evidence="1">Homotetramer.</text>
</comment>
<comment type="subcellular location">
    <subcellularLocation>
        <location evidence="1">Cytoplasm</location>
    </subcellularLocation>
</comment>
<comment type="similarity">
    <text evidence="1">Belongs to the LDH/MDH superfamily. LDH family.</text>
</comment>
<organism>
    <name type="scientific">Thermus thermophilus (strain ATCC BAA-163 / DSM 7039 / HB27)</name>
    <dbReference type="NCBI Taxonomy" id="262724"/>
    <lineage>
        <taxon>Bacteria</taxon>
        <taxon>Thermotogati</taxon>
        <taxon>Deinococcota</taxon>
        <taxon>Deinococci</taxon>
        <taxon>Thermales</taxon>
        <taxon>Thermaceae</taxon>
        <taxon>Thermus</taxon>
    </lineage>
</organism>
<accession>P62055</accession>
<reference key="1">
    <citation type="journal article" date="2004" name="Nat. Biotechnol.">
        <title>The genome sequence of the extreme thermophile Thermus thermophilus.</title>
        <authorList>
            <person name="Henne A."/>
            <person name="Brueggemann H."/>
            <person name="Raasch C."/>
            <person name="Wiezer A."/>
            <person name="Hartsch T."/>
            <person name="Liesegang H."/>
            <person name="Johann A."/>
            <person name="Lienard T."/>
            <person name="Gohl O."/>
            <person name="Martinez-Arias R."/>
            <person name="Jacobi C."/>
            <person name="Starkuviene V."/>
            <person name="Schlenczeck S."/>
            <person name="Dencker S."/>
            <person name="Huber R."/>
            <person name="Klenk H.-P."/>
            <person name="Kramer W."/>
            <person name="Merkl R."/>
            <person name="Gottschalk G."/>
            <person name="Fritz H.-J."/>
        </authorList>
    </citation>
    <scope>NUCLEOTIDE SEQUENCE [LARGE SCALE GENOMIC DNA]</scope>
    <source>
        <strain>ATCC BAA-163 / DSM 7039 / HB27</strain>
    </source>
</reference>
<proteinExistence type="inferred from homology"/>
<evidence type="ECO:0000255" key="1">
    <source>
        <dbReference type="HAMAP-Rule" id="MF_00488"/>
    </source>
</evidence>
<keyword id="KW-0021">Allosteric enzyme</keyword>
<keyword id="KW-0963">Cytoplasm</keyword>
<keyword id="KW-0520">NAD</keyword>
<keyword id="KW-0560">Oxidoreductase</keyword>
<keyword id="KW-0597">Phosphoprotein</keyword>
<sequence>MKVGIVGSGMVGSATAYALALLGVAREVVLVDLDRKLAQAHAEDILHATPFAHPVWVRAGSYGDLEGARAVVLAAGVAQRPGETRLQLLDRNAQVFAQVVPRVLEAAPEAVLLVATNPVDVMTQVAYRLSGLPPGRVVGSGTILDTARFRALLAEHLRVAPQSVHAYVLGEHGDSEVLVWSSAQVGGVPLLEFAEARGRALSPEDRARIDEGVRRAAYRIIEGKGATYYGIGAGLARLVRAILTDEKGVYTVSAFTPEVEGVLEVSLSLPRILGAGGVEGTVYPSLSPEEREALRRSAEILKEAAFALGF</sequence>
<name>LDH_THET2</name>